<proteinExistence type="inferred from homology"/>
<dbReference type="EC" id="6.3.4.19" evidence="1"/>
<dbReference type="EMBL" id="CP001612">
    <property type="protein sequence ID" value="ACP53035.1"/>
    <property type="molecule type" value="Genomic_DNA"/>
</dbReference>
<dbReference type="RefSeq" id="WP_012719336.1">
    <property type="nucleotide sequence ID" value="NC_012633.1"/>
</dbReference>
<dbReference type="KEGG" id="raf:RAF_ORF0060"/>
<dbReference type="HOGENOM" id="CLU_018869_3_2_5"/>
<dbReference type="Proteomes" id="UP000002305">
    <property type="component" value="Chromosome"/>
</dbReference>
<dbReference type="GO" id="GO:0005737">
    <property type="term" value="C:cytoplasm"/>
    <property type="evidence" value="ECO:0007669"/>
    <property type="project" value="UniProtKB-SubCell"/>
</dbReference>
<dbReference type="GO" id="GO:0005524">
    <property type="term" value="F:ATP binding"/>
    <property type="evidence" value="ECO:0007669"/>
    <property type="project" value="UniProtKB-UniRule"/>
</dbReference>
<dbReference type="GO" id="GO:0032267">
    <property type="term" value="F:tRNA(Ile)-lysidine synthase activity"/>
    <property type="evidence" value="ECO:0007669"/>
    <property type="project" value="UniProtKB-EC"/>
</dbReference>
<dbReference type="GO" id="GO:0006400">
    <property type="term" value="P:tRNA modification"/>
    <property type="evidence" value="ECO:0007669"/>
    <property type="project" value="UniProtKB-UniRule"/>
</dbReference>
<dbReference type="CDD" id="cd01992">
    <property type="entry name" value="TilS_N"/>
    <property type="match status" value="1"/>
</dbReference>
<dbReference type="Gene3D" id="3.40.50.620">
    <property type="entry name" value="HUPs"/>
    <property type="match status" value="1"/>
</dbReference>
<dbReference type="HAMAP" id="MF_01161">
    <property type="entry name" value="tRNA_Ile_lys_synt"/>
    <property type="match status" value="1"/>
</dbReference>
<dbReference type="InterPro" id="IPR014729">
    <property type="entry name" value="Rossmann-like_a/b/a_fold"/>
</dbReference>
<dbReference type="InterPro" id="IPR005728">
    <property type="entry name" value="RPE1"/>
</dbReference>
<dbReference type="InterPro" id="IPR011063">
    <property type="entry name" value="TilS/TtcA_N"/>
</dbReference>
<dbReference type="InterPro" id="IPR012094">
    <property type="entry name" value="tRNA_Ile_lys_synt"/>
</dbReference>
<dbReference type="InterPro" id="IPR012795">
    <property type="entry name" value="tRNA_Ile_lys_synt_N"/>
</dbReference>
<dbReference type="NCBIfam" id="TIGR02432">
    <property type="entry name" value="lysidine_TilS_N"/>
    <property type="match status" value="1"/>
</dbReference>
<dbReference type="NCBIfam" id="TIGR01045">
    <property type="entry name" value="RPE1"/>
    <property type="match status" value="1"/>
</dbReference>
<dbReference type="PANTHER" id="PTHR43033">
    <property type="entry name" value="TRNA(ILE)-LYSIDINE SYNTHASE-RELATED"/>
    <property type="match status" value="1"/>
</dbReference>
<dbReference type="PANTHER" id="PTHR43033:SF1">
    <property type="entry name" value="TRNA(ILE)-LYSIDINE SYNTHASE-RELATED"/>
    <property type="match status" value="1"/>
</dbReference>
<dbReference type="Pfam" id="PF01171">
    <property type="entry name" value="ATP_bind_3"/>
    <property type="match status" value="1"/>
</dbReference>
<dbReference type="SUPFAM" id="SSF52402">
    <property type="entry name" value="Adenine nucleotide alpha hydrolases-like"/>
    <property type="match status" value="1"/>
</dbReference>
<sequence>MLYEKFEYNINNLIGNFGLSKISIAVSGGSDSVALLYLANIWAEKNNIELFVISVDHNLREQSKQETHYIQNISNSLNRKHYSLSFYHQNNFSNLQERAREGRYDLMTNLCLELDILVLLTAHHEDDYVENFCLRLERNSGIFGLSSSNINWYNNIQIIRPLYNIPKSKLVEYLVRHNIKWFEDESNSSDKYRRNVIRQKLAKGADYIRHFSKPVYREEFKGDTERSTAAYTLVREDASTGTASKLSLEAKCGKMSKAAIISQQLKTNKLIENEFKPELISAIAEAVKIFEYGFAFLDLVKFDKFSNEVKVQIINFLLIIISGQSRVARFYSVEPILKLITQDVNFKNTLHGCIIKRIQNELLIYREFGKKLPESKILLDKSVIWDNRFCITKNQETPNCFVTHLSLKDYKIIKKQLDLEPLKNLSCKNHNAVLLTLPIIKILEKVIAIPHISYYDNDMWNFEVSFSPNFVSRFTHFC</sequence>
<keyword id="KW-0067">ATP-binding</keyword>
<keyword id="KW-0963">Cytoplasm</keyword>
<keyword id="KW-0436">Ligase</keyword>
<keyword id="KW-0547">Nucleotide-binding</keyword>
<keyword id="KW-0819">tRNA processing</keyword>
<protein>
    <recommendedName>
        <fullName evidence="1">tRNA(Ile)-lysidine synthase</fullName>
        <ecNumber evidence="1">6.3.4.19</ecNumber>
    </recommendedName>
    <alternativeName>
        <fullName evidence="1">tRNA(Ile)-2-lysyl-cytidine synthase</fullName>
    </alternativeName>
    <alternativeName>
        <fullName evidence="1">tRNA(Ile)-lysidine synthetase</fullName>
    </alternativeName>
</protein>
<comment type="function">
    <text evidence="1">Ligates lysine onto the cytidine present at position 34 of the AUA codon-specific tRNA(Ile) that contains the anticodon CAU, in an ATP-dependent manner. Cytidine is converted to lysidine, thus changing the amino acid specificity of the tRNA from methionine to isoleucine.</text>
</comment>
<comment type="catalytic activity">
    <reaction evidence="1">
        <text>cytidine(34) in tRNA(Ile2) + L-lysine + ATP = lysidine(34) in tRNA(Ile2) + AMP + diphosphate + H(+)</text>
        <dbReference type="Rhea" id="RHEA:43744"/>
        <dbReference type="Rhea" id="RHEA-COMP:10625"/>
        <dbReference type="Rhea" id="RHEA-COMP:10670"/>
        <dbReference type="ChEBI" id="CHEBI:15378"/>
        <dbReference type="ChEBI" id="CHEBI:30616"/>
        <dbReference type="ChEBI" id="CHEBI:32551"/>
        <dbReference type="ChEBI" id="CHEBI:33019"/>
        <dbReference type="ChEBI" id="CHEBI:82748"/>
        <dbReference type="ChEBI" id="CHEBI:83665"/>
        <dbReference type="ChEBI" id="CHEBI:456215"/>
        <dbReference type="EC" id="6.3.4.19"/>
    </reaction>
</comment>
<comment type="subcellular location">
    <subcellularLocation>
        <location evidence="1">Cytoplasm</location>
    </subcellularLocation>
</comment>
<comment type="domain">
    <text>The N-terminal region contains the highly conserved SGGXDS motif, predicted to be a P-loop motif involved in ATP binding.</text>
</comment>
<comment type="similarity">
    <text evidence="1">Belongs to the tRNA(Ile)-lysidine synthase family.</text>
</comment>
<gene>
    <name evidence="1" type="primary">tilS</name>
    <name type="ordered locus">RAF_ORF0060</name>
</gene>
<accession>C3PM75</accession>
<organism>
    <name type="scientific">Rickettsia africae (strain ESF-5)</name>
    <dbReference type="NCBI Taxonomy" id="347255"/>
    <lineage>
        <taxon>Bacteria</taxon>
        <taxon>Pseudomonadati</taxon>
        <taxon>Pseudomonadota</taxon>
        <taxon>Alphaproteobacteria</taxon>
        <taxon>Rickettsiales</taxon>
        <taxon>Rickettsiaceae</taxon>
        <taxon>Rickettsieae</taxon>
        <taxon>Rickettsia</taxon>
        <taxon>spotted fever group</taxon>
    </lineage>
</organism>
<reference key="1">
    <citation type="journal article" date="2009" name="BMC Genomics">
        <title>Analysis of the Rickettsia africae genome reveals that virulence acquisition in Rickettsia species may be explained by genome reduction.</title>
        <authorList>
            <person name="Fournier P.-E."/>
            <person name="El Karkouri K."/>
            <person name="Leroy Q."/>
            <person name="Robert C."/>
            <person name="Giumelli B."/>
            <person name="Renesto P."/>
            <person name="Socolovschi C."/>
            <person name="Parola P."/>
            <person name="Audic S."/>
            <person name="Raoult D."/>
        </authorList>
    </citation>
    <scope>NUCLEOTIDE SEQUENCE [LARGE SCALE GENOMIC DNA]</scope>
    <source>
        <strain>ESF-5</strain>
    </source>
</reference>
<feature type="chain" id="PRO_1000213718" description="tRNA(Ile)-lysidine synthase">
    <location>
        <begin position="1"/>
        <end position="478"/>
    </location>
</feature>
<feature type="binding site" evidence="1">
    <location>
        <begin position="27"/>
        <end position="32"/>
    </location>
    <ligand>
        <name>ATP</name>
        <dbReference type="ChEBI" id="CHEBI:30616"/>
    </ligand>
</feature>
<evidence type="ECO:0000255" key="1">
    <source>
        <dbReference type="HAMAP-Rule" id="MF_01161"/>
    </source>
</evidence>
<name>TILS_RICAE</name>